<comment type="cofactor">
    <cofactor evidence="1">
        <name>Zn(2+)</name>
        <dbReference type="ChEBI" id="CHEBI:29105"/>
    </cofactor>
    <text evidence="1">Binds 2 Zn(2+) ions per subunit.</text>
</comment>
<comment type="disruption phenotype">
    <text evidence="2">Non-essential, it can be disrupted (PubMed:12060778).</text>
</comment>
<comment type="similarity">
    <text evidence="3">Belongs to the peptidase M20A family.</text>
</comment>
<sequence length="463" mass="51053">MNWEVEVIRKKEDLIRDTQEFLRINSVMDETTAGPGKPFGEGVNASLTSLLELGEKEGFTTKNLDGFAGHIEWGEGDDIIGVLCHVDVVPPGDGWTSDPFSAEIRNGRIYARGAIDDKGPTMAAFYALKIVKDMNLPLSKRVRMIIGTDEESDWRCVEHYFKHEEMPTMGFAPDADFPIINAEKGIIDASLLIPHRPNQAEPKAVLVSFQSGLRLNMVPDAAEAVIEGPKNEEILSSFKDMLRTTDQKGEAAIENGQLILRMYGLSCHAMEPNNGINAGILLCEFLQQTELDDAGKRFVQVVTDKFSGDTRGKKLDIDCEDEISGELTLNVGTLRYKEGQGGELGINIRYPVTAESKVIRDTFESASEFELGEFKDSKPHHVSADHPLVKTLQKVYEGQLGKKADLISIGGGTYARSLKAGVAFGPLFPGRPDSAHQKDEYIEIDDLLRSTALYAQAIYELAK</sequence>
<evidence type="ECO:0000250" key="1"/>
<evidence type="ECO:0000269" key="2">
    <source>
    </source>
</evidence>
<evidence type="ECO:0000305" key="3"/>
<organism>
    <name type="scientific">Bacillus subtilis (strain 168)</name>
    <dbReference type="NCBI Taxonomy" id="224308"/>
    <lineage>
        <taxon>Bacteria</taxon>
        <taxon>Bacillati</taxon>
        <taxon>Bacillota</taxon>
        <taxon>Bacilli</taxon>
        <taxon>Bacillales</taxon>
        <taxon>Bacillaceae</taxon>
        <taxon>Bacillus</taxon>
    </lineage>
</organism>
<gene>
    <name type="primary">ytjP</name>
    <name type="ordered locus">BSU29980</name>
</gene>
<reference key="1">
    <citation type="journal article" date="1997" name="Microbiology">
        <title>Sequencing and functional annotation of the Bacillus subtilis genes in the 200 kb rrnB-dnaB region.</title>
        <authorList>
            <person name="Lapidus A."/>
            <person name="Galleron N."/>
            <person name="Sorokin A."/>
            <person name="Ehrlich S.D."/>
        </authorList>
    </citation>
    <scope>NUCLEOTIDE SEQUENCE [GENOMIC DNA]</scope>
    <source>
        <strain>168</strain>
    </source>
</reference>
<reference key="2">
    <citation type="journal article" date="1997" name="Nature">
        <title>The complete genome sequence of the Gram-positive bacterium Bacillus subtilis.</title>
        <authorList>
            <person name="Kunst F."/>
            <person name="Ogasawara N."/>
            <person name="Moszer I."/>
            <person name="Albertini A.M."/>
            <person name="Alloni G."/>
            <person name="Azevedo V."/>
            <person name="Bertero M.G."/>
            <person name="Bessieres P."/>
            <person name="Bolotin A."/>
            <person name="Borchert S."/>
            <person name="Borriss R."/>
            <person name="Boursier L."/>
            <person name="Brans A."/>
            <person name="Braun M."/>
            <person name="Brignell S.C."/>
            <person name="Bron S."/>
            <person name="Brouillet S."/>
            <person name="Bruschi C.V."/>
            <person name="Caldwell B."/>
            <person name="Capuano V."/>
            <person name="Carter N.M."/>
            <person name="Choi S.-K."/>
            <person name="Codani J.-J."/>
            <person name="Connerton I.F."/>
            <person name="Cummings N.J."/>
            <person name="Daniel R.A."/>
            <person name="Denizot F."/>
            <person name="Devine K.M."/>
            <person name="Duesterhoeft A."/>
            <person name="Ehrlich S.D."/>
            <person name="Emmerson P.T."/>
            <person name="Entian K.-D."/>
            <person name="Errington J."/>
            <person name="Fabret C."/>
            <person name="Ferrari E."/>
            <person name="Foulger D."/>
            <person name="Fritz C."/>
            <person name="Fujita M."/>
            <person name="Fujita Y."/>
            <person name="Fuma S."/>
            <person name="Galizzi A."/>
            <person name="Galleron N."/>
            <person name="Ghim S.-Y."/>
            <person name="Glaser P."/>
            <person name="Goffeau A."/>
            <person name="Golightly E.J."/>
            <person name="Grandi G."/>
            <person name="Guiseppi G."/>
            <person name="Guy B.J."/>
            <person name="Haga K."/>
            <person name="Haiech J."/>
            <person name="Harwood C.R."/>
            <person name="Henaut A."/>
            <person name="Hilbert H."/>
            <person name="Holsappel S."/>
            <person name="Hosono S."/>
            <person name="Hullo M.-F."/>
            <person name="Itaya M."/>
            <person name="Jones L.-M."/>
            <person name="Joris B."/>
            <person name="Karamata D."/>
            <person name="Kasahara Y."/>
            <person name="Klaerr-Blanchard M."/>
            <person name="Klein C."/>
            <person name="Kobayashi Y."/>
            <person name="Koetter P."/>
            <person name="Koningstein G."/>
            <person name="Krogh S."/>
            <person name="Kumano M."/>
            <person name="Kurita K."/>
            <person name="Lapidus A."/>
            <person name="Lardinois S."/>
            <person name="Lauber J."/>
            <person name="Lazarevic V."/>
            <person name="Lee S.-M."/>
            <person name="Levine A."/>
            <person name="Liu H."/>
            <person name="Masuda S."/>
            <person name="Mauel C."/>
            <person name="Medigue C."/>
            <person name="Medina N."/>
            <person name="Mellado R.P."/>
            <person name="Mizuno M."/>
            <person name="Moestl D."/>
            <person name="Nakai S."/>
            <person name="Noback M."/>
            <person name="Noone D."/>
            <person name="O'Reilly M."/>
            <person name="Ogawa K."/>
            <person name="Ogiwara A."/>
            <person name="Oudega B."/>
            <person name="Park S.-H."/>
            <person name="Parro V."/>
            <person name="Pohl T.M."/>
            <person name="Portetelle D."/>
            <person name="Porwollik S."/>
            <person name="Prescott A.M."/>
            <person name="Presecan E."/>
            <person name="Pujic P."/>
            <person name="Purnelle B."/>
            <person name="Rapoport G."/>
            <person name="Rey M."/>
            <person name="Reynolds S."/>
            <person name="Rieger M."/>
            <person name="Rivolta C."/>
            <person name="Rocha E."/>
            <person name="Roche B."/>
            <person name="Rose M."/>
            <person name="Sadaie Y."/>
            <person name="Sato T."/>
            <person name="Scanlan E."/>
            <person name="Schleich S."/>
            <person name="Schroeter R."/>
            <person name="Scoffone F."/>
            <person name="Sekiguchi J."/>
            <person name="Sekowska A."/>
            <person name="Seror S.J."/>
            <person name="Serror P."/>
            <person name="Shin B.-S."/>
            <person name="Soldo B."/>
            <person name="Sorokin A."/>
            <person name="Tacconi E."/>
            <person name="Takagi T."/>
            <person name="Takahashi H."/>
            <person name="Takemaru K."/>
            <person name="Takeuchi M."/>
            <person name="Tamakoshi A."/>
            <person name="Tanaka T."/>
            <person name="Terpstra P."/>
            <person name="Tognoni A."/>
            <person name="Tosato V."/>
            <person name="Uchiyama S."/>
            <person name="Vandenbol M."/>
            <person name="Vannier F."/>
            <person name="Vassarotti A."/>
            <person name="Viari A."/>
            <person name="Wambutt R."/>
            <person name="Wedler E."/>
            <person name="Wedler H."/>
            <person name="Weitzenegger T."/>
            <person name="Winters P."/>
            <person name="Wipat A."/>
            <person name="Yamamoto H."/>
            <person name="Yamane K."/>
            <person name="Yasumoto K."/>
            <person name="Yata K."/>
            <person name="Yoshida K."/>
            <person name="Yoshikawa H.-F."/>
            <person name="Zumstein E."/>
            <person name="Yoshikawa H."/>
            <person name="Danchin A."/>
        </authorList>
    </citation>
    <scope>NUCLEOTIDE SEQUENCE [LARGE SCALE GENOMIC DNA]</scope>
    <source>
        <strain>168</strain>
    </source>
</reference>
<reference key="3">
    <citation type="journal article" date="2002" name="Proc. Natl. Acad. Sci. U.S.A.">
        <title>An expanded view of bacterial DNA replication.</title>
        <authorList>
            <person name="Noirot-Gros M.-F."/>
            <person name="Dervyn E."/>
            <person name="Wu L.J."/>
            <person name="Mervelet P."/>
            <person name="Errington J."/>
            <person name="Ehrlich S.D."/>
            <person name="Noirot P."/>
        </authorList>
    </citation>
    <scope>DISRUPTION PHENOTYPE</scope>
    <source>
        <strain>168</strain>
    </source>
</reference>
<dbReference type="EC" id="3.4.13.-"/>
<dbReference type="EMBL" id="AF008220">
    <property type="protein sequence ID" value="AAC00279.1"/>
    <property type="molecule type" value="Genomic_DNA"/>
</dbReference>
<dbReference type="EMBL" id="AL009126">
    <property type="protein sequence ID" value="CAB14976.1"/>
    <property type="molecule type" value="Genomic_DNA"/>
</dbReference>
<dbReference type="PIR" id="B69994">
    <property type="entry name" value="B69994"/>
</dbReference>
<dbReference type="RefSeq" id="NP_390876.1">
    <property type="nucleotide sequence ID" value="NC_000964.3"/>
</dbReference>
<dbReference type="SMR" id="O34944"/>
<dbReference type="FunCoup" id="O34944">
    <property type="interactions" value="152"/>
</dbReference>
<dbReference type="IntAct" id="O34944">
    <property type="interactions" value="11"/>
</dbReference>
<dbReference type="STRING" id="224308.BSU29980"/>
<dbReference type="jPOST" id="O34944"/>
<dbReference type="PaxDb" id="224308-BSU29980"/>
<dbReference type="EnsemblBacteria" id="CAB14976">
    <property type="protein sequence ID" value="CAB14976"/>
    <property type="gene ID" value="BSU_29980"/>
</dbReference>
<dbReference type="GeneID" id="937290"/>
<dbReference type="KEGG" id="bsu:BSU29980"/>
<dbReference type="PATRIC" id="fig|224308.179.peg.3256"/>
<dbReference type="eggNOG" id="COG0624">
    <property type="taxonomic scope" value="Bacteria"/>
</dbReference>
<dbReference type="InParanoid" id="O34944"/>
<dbReference type="OrthoDB" id="9761532at2"/>
<dbReference type="PhylomeDB" id="O34944"/>
<dbReference type="BioCyc" id="BSUB:BSU29980-MONOMER"/>
<dbReference type="Proteomes" id="UP000001570">
    <property type="component" value="Chromosome"/>
</dbReference>
<dbReference type="GO" id="GO:0008777">
    <property type="term" value="F:acetylornithine deacetylase activity"/>
    <property type="evidence" value="ECO:0000318"/>
    <property type="project" value="GO_Central"/>
</dbReference>
<dbReference type="GO" id="GO:0016805">
    <property type="term" value="F:dipeptidase activity"/>
    <property type="evidence" value="ECO:0007669"/>
    <property type="project" value="UniProtKB-KW"/>
</dbReference>
<dbReference type="GO" id="GO:0008237">
    <property type="term" value="F:metallopeptidase activity"/>
    <property type="evidence" value="ECO:0007669"/>
    <property type="project" value="UniProtKB-KW"/>
</dbReference>
<dbReference type="GO" id="GO:0008270">
    <property type="term" value="F:zinc ion binding"/>
    <property type="evidence" value="ECO:0007669"/>
    <property type="project" value="InterPro"/>
</dbReference>
<dbReference type="GO" id="GO:0006526">
    <property type="term" value="P:L-arginine biosynthetic process"/>
    <property type="evidence" value="ECO:0000318"/>
    <property type="project" value="GO_Central"/>
</dbReference>
<dbReference type="GO" id="GO:0006508">
    <property type="term" value="P:proteolysis"/>
    <property type="evidence" value="ECO:0007669"/>
    <property type="project" value="UniProtKB-KW"/>
</dbReference>
<dbReference type="CDD" id="cd03888">
    <property type="entry name" value="M20_PepV"/>
    <property type="match status" value="1"/>
</dbReference>
<dbReference type="Gene3D" id="3.30.70.360">
    <property type="match status" value="2"/>
</dbReference>
<dbReference type="Gene3D" id="3.40.630.10">
    <property type="entry name" value="Zn peptidases"/>
    <property type="match status" value="1"/>
</dbReference>
<dbReference type="InterPro" id="IPR001261">
    <property type="entry name" value="ArgE/DapE_CS"/>
</dbReference>
<dbReference type="InterPro" id="IPR036264">
    <property type="entry name" value="Bact_exopeptidase_dim_dom"/>
</dbReference>
<dbReference type="InterPro" id="IPR010964">
    <property type="entry name" value="M20A_pepV-rel"/>
</dbReference>
<dbReference type="InterPro" id="IPR002933">
    <property type="entry name" value="Peptidase_M20"/>
</dbReference>
<dbReference type="InterPro" id="IPR050072">
    <property type="entry name" value="Peptidase_M20A"/>
</dbReference>
<dbReference type="NCBIfam" id="TIGR01887">
    <property type="entry name" value="dipeptidaselike"/>
    <property type="match status" value="1"/>
</dbReference>
<dbReference type="NCBIfam" id="NF005591">
    <property type="entry name" value="PRK07318.1"/>
    <property type="match status" value="1"/>
</dbReference>
<dbReference type="PANTHER" id="PTHR43808">
    <property type="entry name" value="ACETYLORNITHINE DEACETYLASE"/>
    <property type="match status" value="1"/>
</dbReference>
<dbReference type="PANTHER" id="PTHR43808:SF31">
    <property type="entry name" value="N-ACETYL-L-CITRULLINE DEACETYLASE"/>
    <property type="match status" value="1"/>
</dbReference>
<dbReference type="Pfam" id="PF01546">
    <property type="entry name" value="Peptidase_M20"/>
    <property type="match status" value="1"/>
</dbReference>
<dbReference type="SUPFAM" id="SSF55031">
    <property type="entry name" value="Bacterial exopeptidase dimerisation domain"/>
    <property type="match status" value="1"/>
</dbReference>
<dbReference type="SUPFAM" id="SSF53187">
    <property type="entry name" value="Zn-dependent exopeptidases"/>
    <property type="match status" value="1"/>
</dbReference>
<dbReference type="PROSITE" id="PS00759">
    <property type="entry name" value="ARGE_DAPE_CPG2_2"/>
    <property type="match status" value="1"/>
</dbReference>
<accession>O34944</accession>
<accession>Q795S3</accession>
<proteinExistence type="inferred from homology"/>
<name>PEPVL_BACSU</name>
<protein>
    <recommendedName>
        <fullName>Putative dipeptidase YtjP</fullName>
        <ecNumber>3.4.13.-</ecNumber>
    </recommendedName>
</protein>
<feature type="chain" id="PRO_0000360668" description="Putative dipeptidase YtjP">
    <location>
        <begin position="1"/>
        <end position="463"/>
    </location>
</feature>
<feature type="active site" evidence="1">
    <location>
        <position position="87"/>
    </location>
</feature>
<feature type="active site" description="Proton acceptor" evidence="1">
    <location>
        <position position="150"/>
    </location>
</feature>
<feature type="binding site" evidence="1">
    <location>
        <position position="85"/>
    </location>
    <ligand>
        <name>Zn(2+)</name>
        <dbReference type="ChEBI" id="CHEBI:29105"/>
        <label>2</label>
    </ligand>
</feature>
<feature type="binding site" evidence="1">
    <location>
        <position position="116"/>
    </location>
    <ligand>
        <name>Zn(2+)</name>
        <dbReference type="ChEBI" id="CHEBI:29105"/>
        <label>1</label>
    </ligand>
</feature>
<feature type="binding site" evidence="1">
    <location>
        <position position="116"/>
    </location>
    <ligand>
        <name>Zn(2+)</name>
        <dbReference type="ChEBI" id="CHEBI:29105"/>
        <label>2</label>
    </ligand>
</feature>
<feature type="binding site" evidence="1">
    <location>
        <position position="151"/>
    </location>
    <ligand>
        <name>Zn(2+)</name>
        <dbReference type="ChEBI" id="CHEBI:29105"/>
        <label>1</label>
    </ligand>
</feature>
<feature type="binding site" evidence="1">
    <location>
        <position position="174"/>
    </location>
    <ligand>
        <name>Zn(2+)</name>
        <dbReference type="ChEBI" id="CHEBI:29105"/>
        <label>2</label>
    </ligand>
</feature>
<feature type="binding site" evidence="1">
    <location>
        <position position="436"/>
    </location>
    <ligand>
        <name>Zn(2+)</name>
        <dbReference type="ChEBI" id="CHEBI:29105"/>
        <label>1</label>
    </ligand>
</feature>
<keyword id="KW-0224">Dipeptidase</keyword>
<keyword id="KW-0378">Hydrolase</keyword>
<keyword id="KW-0479">Metal-binding</keyword>
<keyword id="KW-0482">Metalloprotease</keyword>
<keyword id="KW-0645">Protease</keyword>
<keyword id="KW-1185">Reference proteome</keyword>
<keyword id="KW-0862">Zinc</keyword>